<gene>
    <name evidence="1" type="primary">hflD</name>
    <name type="ordered locus">Smlt2331</name>
</gene>
<evidence type="ECO:0000255" key="1">
    <source>
        <dbReference type="HAMAP-Rule" id="MF_00695"/>
    </source>
</evidence>
<feature type="chain" id="PRO_1000132306" description="High frequency lysogenization protein HflD homolog">
    <location>
        <begin position="1"/>
        <end position="204"/>
    </location>
</feature>
<keyword id="KW-0997">Cell inner membrane</keyword>
<keyword id="KW-1003">Cell membrane</keyword>
<keyword id="KW-0963">Cytoplasm</keyword>
<keyword id="KW-0472">Membrane</keyword>
<keyword id="KW-1185">Reference proteome</keyword>
<sequence>MSFTVDDRVLALAGIAQALQQVRRIADTGHSDAAAVRTAVDSVFRVDASSPQEVFGDRHALKSGLRLLHNYFRSQGQDPILPKLALSVLQLERRFVQDGATVNKVASGIERAQRQANELGDSGHPDVLANLGGLYADTISHLKPRVMVQGNPHYLGQAGVVAEIRALLLAAVRAAVLWRQLGGSYWDFLFGRKAMIEAVDRQLA</sequence>
<name>HFLD_STRMK</name>
<protein>
    <recommendedName>
        <fullName evidence="1">High frequency lysogenization protein HflD homolog</fullName>
    </recommendedName>
</protein>
<proteinExistence type="inferred from homology"/>
<comment type="subcellular location">
    <subcellularLocation>
        <location>Cytoplasm</location>
    </subcellularLocation>
    <subcellularLocation>
        <location evidence="1">Cell inner membrane</location>
        <topology evidence="1">Peripheral membrane protein</topology>
        <orientation evidence="1">Cytoplasmic side</orientation>
    </subcellularLocation>
</comment>
<comment type="similarity">
    <text evidence="1">Belongs to the HflD family.</text>
</comment>
<accession>B2FQX1</accession>
<reference key="1">
    <citation type="journal article" date="2008" name="Genome Biol.">
        <title>The complete genome, comparative and functional analysis of Stenotrophomonas maltophilia reveals an organism heavily shielded by drug resistance determinants.</title>
        <authorList>
            <person name="Crossman L.C."/>
            <person name="Gould V.C."/>
            <person name="Dow J.M."/>
            <person name="Vernikos G.S."/>
            <person name="Okazaki A."/>
            <person name="Sebaihia M."/>
            <person name="Saunders D."/>
            <person name="Arrowsmith C."/>
            <person name="Carver T."/>
            <person name="Peters N."/>
            <person name="Adlem E."/>
            <person name="Kerhornou A."/>
            <person name="Lord A."/>
            <person name="Murphy L."/>
            <person name="Seeger K."/>
            <person name="Squares R."/>
            <person name="Rutter S."/>
            <person name="Quail M.A."/>
            <person name="Rajandream M.A."/>
            <person name="Harris D."/>
            <person name="Churcher C."/>
            <person name="Bentley S.D."/>
            <person name="Parkhill J."/>
            <person name="Thomson N.R."/>
            <person name="Avison M.B."/>
        </authorList>
    </citation>
    <scope>NUCLEOTIDE SEQUENCE [LARGE SCALE GENOMIC DNA]</scope>
    <source>
        <strain>K279a</strain>
    </source>
</reference>
<dbReference type="EMBL" id="AM743169">
    <property type="protein sequence ID" value="CAQ45824.1"/>
    <property type="molecule type" value="Genomic_DNA"/>
</dbReference>
<dbReference type="RefSeq" id="WP_012480133.1">
    <property type="nucleotide sequence ID" value="NC_010943.1"/>
</dbReference>
<dbReference type="SMR" id="B2FQX1"/>
<dbReference type="EnsemblBacteria" id="CAQ45824">
    <property type="protein sequence ID" value="CAQ45824"/>
    <property type="gene ID" value="Smlt2331"/>
</dbReference>
<dbReference type="KEGG" id="sml:Smlt2331"/>
<dbReference type="PATRIC" id="fig|522373.3.peg.2225"/>
<dbReference type="eggNOG" id="COG2915">
    <property type="taxonomic scope" value="Bacteria"/>
</dbReference>
<dbReference type="HOGENOM" id="CLU_098920_0_0_6"/>
<dbReference type="Proteomes" id="UP000008840">
    <property type="component" value="Chromosome"/>
</dbReference>
<dbReference type="GO" id="GO:0005737">
    <property type="term" value="C:cytoplasm"/>
    <property type="evidence" value="ECO:0007669"/>
    <property type="project" value="UniProtKB-SubCell"/>
</dbReference>
<dbReference type="GO" id="GO:0005886">
    <property type="term" value="C:plasma membrane"/>
    <property type="evidence" value="ECO:0007669"/>
    <property type="project" value="UniProtKB-SubCell"/>
</dbReference>
<dbReference type="Gene3D" id="1.10.3890.10">
    <property type="entry name" value="HflD-like"/>
    <property type="match status" value="1"/>
</dbReference>
<dbReference type="HAMAP" id="MF_00695">
    <property type="entry name" value="HflD_protein"/>
    <property type="match status" value="1"/>
</dbReference>
<dbReference type="InterPro" id="IPR007451">
    <property type="entry name" value="HflD"/>
</dbReference>
<dbReference type="InterPro" id="IPR035932">
    <property type="entry name" value="HflD-like_sf"/>
</dbReference>
<dbReference type="NCBIfam" id="NF001246">
    <property type="entry name" value="PRK00218.1-2"/>
    <property type="match status" value="1"/>
</dbReference>
<dbReference type="NCBIfam" id="NF001250">
    <property type="entry name" value="PRK00218.1-6"/>
    <property type="match status" value="1"/>
</dbReference>
<dbReference type="PANTHER" id="PTHR38100">
    <property type="entry name" value="HIGH FREQUENCY LYSOGENIZATION PROTEIN HFLD"/>
    <property type="match status" value="1"/>
</dbReference>
<dbReference type="PANTHER" id="PTHR38100:SF1">
    <property type="entry name" value="HIGH FREQUENCY LYSOGENIZATION PROTEIN HFLD"/>
    <property type="match status" value="1"/>
</dbReference>
<dbReference type="Pfam" id="PF04356">
    <property type="entry name" value="DUF489"/>
    <property type="match status" value="1"/>
</dbReference>
<dbReference type="SUPFAM" id="SSF101322">
    <property type="entry name" value="YcfC-like"/>
    <property type="match status" value="1"/>
</dbReference>
<organism>
    <name type="scientific">Stenotrophomonas maltophilia (strain K279a)</name>
    <dbReference type="NCBI Taxonomy" id="522373"/>
    <lineage>
        <taxon>Bacteria</taxon>
        <taxon>Pseudomonadati</taxon>
        <taxon>Pseudomonadota</taxon>
        <taxon>Gammaproteobacteria</taxon>
        <taxon>Lysobacterales</taxon>
        <taxon>Lysobacteraceae</taxon>
        <taxon>Stenotrophomonas</taxon>
        <taxon>Stenotrophomonas maltophilia group</taxon>
    </lineage>
</organism>